<comment type="function">
    <text>Ca(2+)-dependent bioluminescence photoprotein. Displays an emission peak at 470 nm (blue light). Trace amounts of calcium ion trigger the intramolecular oxidation of the chromophore, coelenterazine into coelenteramide and CO(2) with the concomitant emission of light.</text>
</comment>
<comment type="PTM">
    <text>The reduction of the disulfide bond is necessary to regenerate aequorin from apoaequorin.</text>
</comment>
<comment type="biotechnology">
    <text>Aequorin is used as an intracellular Ca(2+) indicator. Aequorin has a number of advantages over other Ca(2+) indicators, for example, low leakage rate from cells, lack of intracellular compartmentalization or sequestration and it does not disrupt cell functions or embryo development.</text>
</comment>
<comment type="similarity">
    <text evidence="4">Belongs to the aequorin family.</text>
</comment>
<comment type="caution">
    <text evidence="5">Was originally thought to have an internal disulfide bond.</text>
</comment>
<comment type="online information" name="Wikipedia">
    <link uri="https://en.wikipedia.org/wiki/Aequorin"/>
    <text>Aequorin entry</text>
</comment>
<reference key="1">
    <citation type="journal article" date="1987" name="Biochemistry">
        <title>Sequence comparisons of complementary DNAs encoding aequorin isotypes.</title>
        <authorList>
            <person name="Prasher D.C."/>
            <person name="McCann R.O."/>
            <person name="Longiaru M."/>
            <person name="Cormier M.J."/>
        </authorList>
    </citation>
    <scope>NUCLEOTIDE SEQUENCE [MRNA]</scope>
</reference>
<reference key="2">
    <citation type="journal article" date="1985" name="Biochemistry">
        <title>Amino acid sequence of the calcium-dependent photoprotein aequorin.</title>
        <authorList>
            <person name="Charbonneau H."/>
            <person name="Walsh K.A."/>
            <person name="McCann R.O."/>
            <person name="Prendergast F.G."/>
            <person name="Cormier M.J."/>
            <person name="Vanaman T.C."/>
        </authorList>
    </citation>
    <scope>PROTEIN SEQUENCE OF 8-196</scope>
</reference>
<reference key="3">
    <citation type="journal article" date="1991" name="FEBS Lett.">
        <title>A C-terminal proline is required for bioluminescence of the Ca(2+)-binding photoprotein, aequorin.</title>
        <authorList>
            <person name="Nomura M."/>
            <person name="Inouye S."/>
            <person name="Ohmiya Y."/>
            <person name="Tsuji F.I."/>
        </authorList>
    </citation>
    <scope>MUTAGENESIS OF PRO-196</scope>
</reference>
<reference key="4">
    <citation type="journal article" date="1993" name="FEBS Lett.">
        <title>Mass spectrometric evidence for a disulfide bond in aequorin regeneration.</title>
        <authorList>
            <person name="Ohmiya Y."/>
            <person name="Kurono S."/>
            <person name="Ohashi M."/>
            <person name="Fagan T.F."/>
            <person name="Tsuji F.I."/>
        </authorList>
    </citation>
    <scope>PRELIMINARY DISULFIDE BOND</scope>
</reference>
<reference key="5">
    <citation type="journal article" date="2005" name="Protein Sci.">
        <title>All three Ca2+-binding loops of photoproteins bind calcium ions: the crystal structures of calcium-loaded apo-aequorin and apo-obelin.</title>
        <authorList>
            <person name="Deng L."/>
            <person name="Vysotski E.S."/>
            <person name="Markova S.V."/>
            <person name="Liu Z.-J."/>
            <person name="Lee J."/>
            <person name="Rose J."/>
            <person name="Wang B.-C."/>
        </authorList>
    </citation>
    <scope>X-RAY CRYSTALLOGRAPHY (1.7 ANGSTROMS) OF 7-196 IN COMPLEX WITH CALCIUM IONS</scope>
</reference>
<evidence type="ECO:0000255" key="1">
    <source>
        <dbReference type="PROSITE-ProRule" id="PRU00448"/>
    </source>
</evidence>
<evidence type="ECO:0000269" key="2">
    <source>
    </source>
</evidence>
<evidence type="ECO:0000269" key="3">
    <source>
    </source>
</evidence>
<evidence type="ECO:0000305" key="4"/>
<evidence type="ECO:0000305" key="5">
    <source>
    </source>
</evidence>
<evidence type="ECO:0007829" key="6">
    <source>
        <dbReference type="PDB" id="1SL8"/>
    </source>
</evidence>
<dbReference type="EMBL" id="M16103">
    <property type="protein sequence ID" value="AAA27716.1"/>
    <property type="molecule type" value="mRNA"/>
</dbReference>
<dbReference type="PIR" id="A26623">
    <property type="entry name" value="A26623"/>
</dbReference>
<dbReference type="PDB" id="1SL8">
    <property type="method" value="X-ray"/>
    <property type="resolution" value="1.70 A"/>
    <property type="chains" value="A=7-196"/>
</dbReference>
<dbReference type="PDBsum" id="1SL8"/>
<dbReference type="SMR" id="P07164"/>
<dbReference type="TCDB" id="8.A.82.5.1">
    <property type="family name" value="the calmodulin calcium binding protein (calmodulin) family"/>
</dbReference>
<dbReference type="KEGG" id="ag:AAA27716"/>
<dbReference type="BioCyc" id="MetaCyc:MONOMER-20288"/>
<dbReference type="BRENDA" id="1.13.12.24">
    <property type="organism ID" value="8923"/>
</dbReference>
<dbReference type="BRENDA" id="1.13.12.5">
    <property type="organism ID" value="8923"/>
</dbReference>
<dbReference type="EvolutionaryTrace" id="P07164"/>
<dbReference type="GO" id="GO:0005509">
    <property type="term" value="F:calcium ion binding"/>
    <property type="evidence" value="ECO:0007669"/>
    <property type="project" value="InterPro"/>
</dbReference>
<dbReference type="GO" id="GO:0008218">
    <property type="term" value="P:bioluminescence"/>
    <property type="evidence" value="ECO:0007669"/>
    <property type="project" value="UniProtKB-KW"/>
</dbReference>
<dbReference type="CDD" id="cd00051">
    <property type="entry name" value="EFh"/>
    <property type="match status" value="1"/>
</dbReference>
<dbReference type="Gene3D" id="1.10.238.10">
    <property type="entry name" value="EF-hand"/>
    <property type="match status" value="1"/>
</dbReference>
<dbReference type="InterPro" id="IPR011992">
    <property type="entry name" value="EF-hand-dom_pair"/>
</dbReference>
<dbReference type="InterPro" id="IPR018247">
    <property type="entry name" value="EF_Hand_1_Ca_BS"/>
</dbReference>
<dbReference type="InterPro" id="IPR002048">
    <property type="entry name" value="EF_hand_dom"/>
</dbReference>
<dbReference type="Pfam" id="PF13202">
    <property type="entry name" value="EF-hand_5"/>
    <property type="match status" value="1"/>
</dbReference>
<dbReference type="Pfam" id="PF13499">
    <property type="entry name" value="EF-hand_7"/>
    <property type="match status" value="1"/>
</dbReference>
<dbReference type="SMART" id="SM00054">
    <property type="entry name" value="EFh"/>
    <property type="match status" value="3"/>
</dbReference>
<dbReference type="SUPFAM" id="SSF47473">
    <property type="entry name" value="EF-hand"/>
    <property type="match status" value="1"/>
</dbReference>
<dbReference type="PROSITE" id="PS00018">
    <property type="entry name" value="EF_HAND_1"/>
    <property type="match status" value="3"/>
</dbReference>
<dbReference type="PROSITE" id="PS50222">
    <property type="entry name" value="EF_HAND_2"/>
    <property type="match status" value="3"/>
</dbReference>
<proteinExistence type="evidence at protein level"/>
<name>AEQ1_AEQVI</name>
<sequence>MTSEQYSVKLTPDFDNPKWIGRHKHMFNFLDVNHNGRISLDEMVYKASDIVINNLGATPEQAKRHKDAVEAFFGGAGMKYGVETEWPEYIEGWKRLASEELKRYSKNQITLIRLWGDALFDIIDKDQNGAISLDEWKAYTKSDGIIQSSEDCEETFRVCDIDESGQLDVDEMTRQHLGFWYTMDPACEKLYGGAVP</sequence>
<organism>
    <name type="scientific">Aequorea victoria</name>
    <name type="common">Water jellyfish</name>
    <name type="synonym">Mesonema victoria</name>
    <dbReference type="NCBI Taxonomy" id="6100"/>
    <lineage>
        <taxon>Eukaryota</taxon>
        <taxon>Metazoa</taxon>
        <taxon>Cnidaria</taxon>
        <taxon>Hydrozoa</taxon>
        <taxon>Hydroidolina</taxon>
        <taxon>Leptothecata</taxon>
        <taxon>Aequoreidae</taxon>
        <taxon>Aequorea</taxon>
    </lineage>
</organism>
<feature type="propeptide" id="PRO_0000004126" evidence="3">
    <location>
        <begin position="1"/>
        <end position="7"/>
    </location>
</feature>
<feature type="chain" id="PRO_0000004127" description="Aequorin-1">
    <location>
        <begin position="8"/>
        <end position="196"/>
    </location>
</feature>
<feature type="domain" description="EF-hand 1" evidence="1">
    <location>
        <begin position="18"/>
        <end position="53"/>
    </location>
</feature>
<feature type="domain" description="EF-hand 2" evidence="4">
    <location>
        <begin position="54"/>
        <end position="108"/>
    </location>
</feature>
<feature type="domain" description="EF-hand 3" evidence="1">
    <location>
        <begin position="111"/>
        <end position="146"/>
    </location>
</feature>
<feature type="domain" description="EF-hand 4" evidence="1">
    <location>
        <begin position="147"/>
        <end position="182"/>
    </location>
</feature>
<feature type="region of interest" description="May interact with the chromophore">
    <location>
        <begin position="47"/>
        <end position="57"/>
    </location>
</feature>
<feature type="region of interest" description="May interact with the chromophore">
    <location>
        <begin position="62"/>
        <end position="72"/>
    </location>
</feature>
<feature type="region of interest" description="May interact with the chromophore">
    <location>
        <begin position="107"/>
        <end position="117"/>
    </location>
</feature>
<feature type="binding site" evidence="1">
    <location>
        <position position="31"/>
    </location>
    <ligand>
        <name>Ca(2+)</name>
        <dbReference type="ChEBI" id="CHEBI:29108"/>
        <label>1</label>
    </ligand>
</feature>
<feature type="binding site" evidence="1">
    <location>
        <position position="33"/>
    </location>
    <ligand>
        <name>Ca(2+)</name>
        <dbReference type="ChEBI" id="CHEBI:29108"/>
        <label>1</label>
    </ligand>
</feature>
<feature type="binding site" evidence="1">
    <location>
        <position position="35"/>
    </location>
    <ligand>
        <name>Ca(2+)</name>
        <dbReference type="ChEBI" id="CHEBI:29108"/>
        <label>1</label>
    </ligand>
</feature>
<feature type="binding site" evidence="1">
    <location>
        <position position="37"/>
    </location>
    <ligand>
        <name>Ca(2+)</name>
        <dbReference type="ChEBI" id="CHEBI:29108"/>
        <label>1</label>
    </ligand>
</feature>
<feature type="binding site" evidence="1">
    <location>
        <position position="42"/>
    </location>
    <ligand>
        <name>Ca(2+)</name>
        <dbReference type="ChEBI" id="CHEBI:29108"/>
        <label>1</label>
    </ligand>
</feature>
<feature type="binding site" evidence="1">
    <location>
        <position position="124"/>
    </location>
    <ligand>
        <name>Ca(2+)</name>
        <dbReference type="ChEBI" id="CHEBI:29108"/>
        <label>2</label>
    </ligand>
</feature>
<feature type="binding site" evidence="1">
    <location>
        <position position="126"/>
    </location>
    <ligand>
        <name>Ca(2+)</name>
        <dbReference type="ChEBI" id="CHEBI:29108"/>
        <label>2</label>
    </ligand>
</feature>
<feature type="binding site" evidence="1">
    <location>
        <position position="128"/>
    </location>
    <ligand>
        <name>Ca(2+)</name>
        <dbReference type="ChEBI" id="CHEBI:29108"/>
        <label>2</label>
    </ligand>
</feature>
<feature type="binding site" evidence="1">
    <location>
        <position position="135"/>
    </location>
    <ligand>
        <name>Ca(2+)</name>
        <dbReference type="ChEBI" id="CHEBI:29108"/>
        <label>2</label>
    </ligand>
</feature>
<feature type="binding site" evidence="1">
    <location>
        <position position="160"/>
    </location>
    <ligand>
        <name>Ca(2+)</name>
        <dbReference type="ChEBI" id="CHEBI:29108"/>
        <label>3</label>
    </ligand>
</feature>
<feature type="binding site" evidence="1">
    <location>
        <position position="162"/>
    </location>
    <ligand>
        <name>Ca(2+)</name>
        <dbReference type="ChEBI" id="CHEBI:29108"/>
        <label>3</label>
    </ligand>
</feature>
<feature type="binding site" evidence="1">
    <location>
        <position position="164"/>
    </location>
    <ligand>
        <name>Ca(2+)</name>
        <dbReference type="ChEBI" id="CHEBI:29108"/>
        <label>3</label>
    </ligand>
</feature>
<feature type="binding site" evidence="1">
    <location>
        <position position="166"/>
    </location>
    <ligand>
        <name>Ca(2+)</name>
        <dbReference type="ChEBI" id="CHEBI:29108"/>
        <label>3</label>
    </ligand>
</feature>
<feature type="binding site" evidence="1">
    <location>
        <position position="171"/>
    </location>
    <ligand>
        <name>Ca(2+)</name>
        <dbReference type="ChEBI" id="CHEBI:29108"/>
        <label>3</label>
    </ligand>
</feature>
<feature type="mutagenesis site" description="Loss of bioluminescence." evidence="2">
    <location>
        <position position="196"/>
    </location>
</feature>
<feature type="helix" evidence="6">
    <location>
        <begin position="17"/>
        <end position="30"/>
    </location>
</feature>
<feature type="strand" evidence="6">
    <location>
        <begin position="35"/>
        <end position="39"/>
    </location>
</feature>
<feature type="helix" evidence="6">
    <location>
        <begin position="40"/>
        <end position="53"/>
    </location>
</feature>
<feature type="helix" evidence="6">
    <location>
        <begin position="59"/>
        <end position="75"/>
    </location>
</feature>
<feature type="strand" evidence="6">
    <location>
        <begin position="83"/>
        <end position="85"/>
    </location>
</feature>
<feature type="helix" evidence="6">
    <location>
        <begin position="86"/>
        <end position="105"/>
    </location>
</feature>
<feature type="helix" evidence="6">
    <location>
        <begin position="111"/>
        <end position="123"/>
    </location>
</feature>
<feature type="strand" evidence="6">
    <location>
        <begin position="128"/>
        <end position="131"/>
    </location>
</feature>
<feature type="helix" evidence="6">
    <location>
        <begin position="133"/>
        <end position="142"/>
    </location>
</feature>
<feature type="helix" evidence="6">
    <location>
        <begin position="149"/>
        <end position="159"/>
    </location>
</feature>
<feature type="strand" evidence="6">
    <location>
        <begin position="165"/>
        <end position="167"/>
    </location>
</feature>
<feature type="helix" evidence="6">
    <location>
        <begin position="169"/>
        <end position="180"/>
    </location>
</feature>
<feature type="helix" evidence="6">
    <location>
        <begin position="190"/>
        <end position="193"/>
    </location>
</feature>
<keyword id="KW-0002">3D-structure</keyword>
<keyword id="KW-0106">Calcium</keyword>
<keyword id="KW-0903">Direct protein sequencing</keyword>
<keyword id="KW-1015">Disulfide bond</keyword>
<keyword id="KW-0455">Luminescence</keyword>
<keyword id="KW-0479">Metal-binding</keyword>
<keyword id="KW-0599">Photoprotein</keyword>
<keyword id="KW-0677">Repeat</keyword>
<accession>P07164</accession>
<protein>
    <recommendedName>
        <fullName>Aequorin-1</fullName>
    </recommendedName>
</protein>